<dbReference type="EMBL" id="CP001616">
    <property type="protein sequence ID" value="ACQ92399.1"/>
    <property type="molecule type" value="Genomic_DNA"/>
</dbReference>
<dbReference type="RefSeq" id="WP_012728998.1">
    <property type="nucleotide sequence ID" value="NC_012691.1"/>
</dbReference>
<dbReference type="STRING" id="595494.Tola_0771"/>
<dbReference type="KEGG" id="tau:Tola_0771"/>
<dbReference type="eggNOG" id="ENOG50330SG">
    <property type="taxonomic scope" value="Bacteria"/>
</dbReference>
<dbReference type="HOGENOM" id="CLU_149349_0_0_6"/>
<dbReference type="OrthoDB" id="7689335at2"/>
<dbReference type="Proteomes" id="UP000009073">
    <property type="component" value="Chromosome"/>
</dbReference>
<dbReference type="GO" id="GO:0009399">
    <property type="term" value="P:nitrogen fixation"/>
    <property type="evidence" value="ECO:0007669"/>
    <property type="project" value="UniProtKB-UniRule"/>
</dbReference>
<dbReference type="HAMAP" id="MF_02117">
    <property type="entry name" value="CowN"/>
    <property type="match status" value="1"/>
</dbReference>
<dbReference type="InterPro" id="IPR024899">
    <property type="entry name" value="CowN"/>
</dbReference>
<dbReference type="NCBIfam" id="NF033689">
    <property type="entry name" value="N2Fix_CO_CowN"/>
    <property type="match status" value="1"/>
</dbReference>
<dbReference type="Pfam" id="PF20543">
    <property type="entry name" value="CowN"/>
    <property type="match status" value="1"/>
</dbReference>
<proteinExistence type="inferred from homology"/>
<feature type="chain" id="PRO_0000407274" description="N(2)-fixation sustaining protein CowN">
    <location>
        <begin position="1"/>
        <end position="105"/>
    </location>
</feature>
<gene>
    <name evidence="1" type="primary">cowN</name>
    <name type="ordered locus">Tola_0771</name>
</gene>
<keyword id="KW-0535">Nitrogen fixation</keyword>
<keyword id="KW-1185">Reference proteome</keyword>
<organism>
    <name type="scientific">Tolumonas auensis (strain DSM 9187 / NBRC 110442 / TA 4)</name>
    <dbReference type="NCBI Taxonomy" id="595494"/>
    <lineage>
        <taxon>Bacteria</taxon>
        <taxon>Pseudomonadati</taxon>
        <taxon>Pseudomonadota</taxon>
        <taxon>Gammaproteobacteria</taxon>
        <taxon>Aeromonadales</taxon>
        <taxon>Aeromonadaceae</taxon>
        <taxon>Tolumonas</taxon>
    </lineage>
</organism>
<sequence>MPCSCKQKKATPSDITTDRYITFDGIDCDGNARILMSYIHKHIDDPQKTNKFWDYFRKKAEGGNGPKPDDLFLIHSNLNQIRELFELYEDSEALALLDVVEIECC</sequence>
<name>COWN_TOLAT</name>
<comment type="function">
    <text evidence="1">Is required to sustain N(2)-dependent growth in the presence of low levels of carbon monoxide (CO). Probably acts by protecting the N(2) fixation ability of the nitrogenase complex, which is inactivated in the presence of CO.</text>
</comment>
<comment type="similarity">
    <text evidence="1">Belongs to the CowN family.</text>
</comment>
<evidence type="ECO:0000255" key="1">
    <source>
        <dbReference type="HAMAP-Rule" id="MF_02117"/>
    </source>
</evidence>
<accession>C4LBG4</accession>
<protein>
    <recommendedName>
        <fullName evidence="1">N(2)-fixation sustaining protein CowN</fullName>
    </recommendedName>
    <alternativeName>
        <fullName evidence="1">CO weal-nitrogenase</fullName>
    </alternativeName>
</protein>
<reference key="1">
    <citation type="submission" date="2009-05" db="EMBL/GenBank/DDBJ databases">
        <title>Complete sequence of Tolumonas auensis DSM 9187.</title>
        <authorList>
            <consortium name="US DOE Joint Genome Institute"/>
            <person name="Lucas S."/>
            <person name="Copeland A."/>
            <person name="Lapidus A."/>
            <person name="Glavina del Rio T."/>
            <person name="Tice H."/>
            <person name="Bruce D."/>
            <person name="Goodwin L."/>
            <person name="Pitluck S."/>
            <person name="Chertkov O."/>
            <person name="Brettin T."/>
            <person name="Detter J.C."/>
            <person name="Han C."/>
            <person name="Larimer F."/>
            <person name="Land M."/>
            <person name="Hauser L."/>
            <person name="Kyrpides N."/>
            <person name="Mikhailova N."/>
            <person name="Spring S."/>
            <person name="Beller H."/>
        </authorList>
    </citation>
    <scope>NUCLEOTIDE SEQUENCE [LARGE SCALE GENOMIC DNA]</scope>
    <source>
        <strain>DSM 9187 / NBRC 110442 / TA 4</strain>
    </source>
</reference>